<sequence>MVRIAYLGPEGTFTEAALVRMVAAGLVPETGPDALQRMPVESAPAALAAVRDGGADYACVPIENSIDGSVLPTLDSLAIGVRLQVFAETTLDVTFSIVVKPGRNAADVRTLAAFPVAAAQVRQWLAAHLPAADLRPAYSNADAARQVADGLVDAAVTSPLAAARWGLAALADGVVDESNARTRFVLVGRPGPPPARTGADRTSAVLRIDNQPGALVAALAEFGIRGIDLTRIESRPTRTELGTYLFFVDCVGHIDDEAVAEALKAVHRRCADVRYLGSWPTGPAAGAQPPLVDEASRWLARLRAGKPEQTLVRPDDQGAQA</sequence>
<dbReference type="EC" id="4.2.1.51"/>
<dbReference type="EMBL" id="AL123456">
    <property type="protein sequence ID" value="CCP46667.1"/>
    <property type="molecule type" value="Genomic_DNA"/>
</dbReference>
<dbReference type="PIR" id="C70653">
    <property type="entry name" value="C70653"/>
</dbReference>
<dbReference type="RefSeq" id="NP_218355.1">
    <property type="nucleotide sequence ID" value="NC_000962.3"/>
</dbReference>
<dbReference type="RefSeq" id="WP_003420906.1">
    <property type="nucleotide sequence ID" value="NZ_NVQJ01000022.1"/>
</dbReference>
<dbReference type="SMR" id="P9WIC3"/>
<dbReference type="FunCoup" id="P9WIC3">
    <property type="interactions" value="211"/>
</dbReference>
<dbReference type="STRING" id="83332.Rv3838c"/>
<dbReference type="PaxDb" id="83332-Rv3838c"/>
<dbReference type="DNASU" id="886170"/>
<dbReference type="GeneID" id="886170"/>
<dbReference type="KEGG" id="mtu:Rv3838c"/>
<dbReference type="KEGG" id="mtv:RVBD_3838c"/>
<dbReference type="TubercuList" id="Rv3838c"/>
<dbReference type="eggNOG" id="COG0077">
    <property type="taxonomic scope" value="Bacteria"/>
</dbReference>
<dbReference type="InParanoid" id="P9WIC3"/>
<dbReference type="OrthoDB" id="9802281at2"/>
<dbReference type="PhylomeDB" id="P9WIC3"/>
<dbReference type="BRENDA" id="4.2.1.51">
    <property type="organism ID" value="3445"/>
</dbReference>
<dbReference type="SABIO-RK" id="P9WIC3"/>
<dbReference type="UniPathway" id="UPA00121">
    <property type="reaction ID" value="UER00345"/>
</dbReference>
<dbReference type="Proteomes" id="UP000001584">
    <property type="component" value="Chromosome"/>
</dbReference>
<dbReference type="GO" id="GO:0005737">
    <property type="term" value="C:cytoplasm"/>
    <property type="evidence" value="ECO:0000318"/>
    <property type="project" value="GO_Central"/>
</dbReference>
<dbReference type="GO" id="GO:0016597">
    <property type="term" value="F:amino acid binding"/>
    <property type="evidence" value="ECO:0000314"/>
    <property type="project" value="MTBBASE"/>
</dbReference>
<dbReference type="GO" id="GO:0004664">
    <property type="term" value="F:prephenate dehydratase activity"/>
    <property type="evidence" value="ECO:0000314"/>
    <property type="project" value="MTBBASE"/>
</dbReference>
<dbReference type="GO" id="GO:0042803">
    <property type="term" value="F:protein homodimerization activity"/>
    <property type="evidence" value="ECO:0000314"/>
    <property type="project" value="UniProtKB"/>
</dbReference>
<dbReference type="GO" id="GO:0009094">
    <property type="term" value="P:L-phenylalanine biosynthetic process"/>
    <property type="evidence" value="ECO:0000318"/>
    <property type="project" value="GO_Central"/>
</dbReference>
<dbReference type="GO" id="GO:0033585">
    <property type="term" value="P:L-phenylalanine biosynthetic process from chorismate via phenylpyruvate"/>
    <property type="evidence" value="ECO:0000314"/>
    <property type="project" value="MTBBASE"/>
</dbReference>
<dbReference type="CDD" id="cd04905">
    <property type="entry name" value="ACT_CM-PDT"/>
    <property type="match status" value="1"/>
</dbReference>
<dbReference type="CDD" id="cd13632">
    <property type="entry name" value="PBP2_Aa-PDT_like"/>
    <property type="match status" value="1"/>
</dbReference>
<dbReference type="FunFam" id="3.30.70.260:FF:000012">
    <property type="entry name" value="Prephenate dehydratase"/>
    <property type="match status" value="1"/>
</dbReference>
<dbReference type="FunFam" id="3.40.190.10:FF:000064">
    <property type="entry name" value="Prephenate dehydratase"/>
    <property type="match status" value="1"/>
</dbReference>
<dbReference type="FunFam" id="3.40.190.10:FF:000146">
    <property type="entry name" value="Prephenate dehydratase"/>
    <property type="match status" value="1"/>
</dbReference>
<dbReference type="Gene3D" id="3.30.70.260">
    <property type="match status" value="1"/>
</dbReference>
<dbReference type="Gene3D" id="3.40.190.10">
    <property type="entry name" value="Periplasmic binding protein-like II"/>
    <property type="match status" value="2"/>
</dbReference>
<dbReference type="InterPro" id="IPR045865">
    <property type="entry name" value="ACT-like_dom_sf"/>
</dbReference>
<dbReference type="InterPro" id="IPR002912">
    <property type="entry name" value="ACT_dom"/>
</dbReference>
<dbReference type="InterPro" id="IPR008242">
    <property type="entry name" value="Chor_mutase/pphenate_deHydtase"/>
</dbReference>
<dbReference type="InterPro" id="IPR001086">
    <property type="entry name" value="Preph_deHydtase"/>
</dbReference>
<dbReference type="InterPro" id="IPR018528">
    <property type="entry name" value="Preph_deHydtase_CS"/>
</dbReference>
<dbReference type="NCBIfam" id="NF008865">
    <property type="entry name" value="PRK11898.1"/>
    <property type="match status" value="1"/>
</dbReference>
<dbReference type="PANTHER" id="PTHR21022">
    <property type="entry name" value="PREPHENATE DEHYDRATASE P PROTEIN"/>
    <property type="match status" value="1"/>
</dbReference>
<dbReference type="PANTHER" id="PTHR21022:SF19">
    <property type="entry name" value="PREPHENATE DEHYDRATASE-RELATED"/>
    <property type="match status" value="1"/>
</dbReference>
<dbReference type="Pfam" id="PF01842">
    <property type="entry name" value="ACT"/>
    <property type="match status" value="1"/>
</dbReference>
<dbReference type="Pfam" id="PF00800">
    <property type="entry name" value="PDT"/>
    <property type="match status" value="1"/>
</dbReference>
<dbReference type="PIRSF" id="PIRSF001500">
    <property type="entry name" value="Chor_mut_pdt_Ppr"/>
    <property type="match status" value="1"/>
</dbReference>
<dbReference type="SUPFAM" id="SSF55021">
    <property type="entry name" value="ACT-like"/>
    <property type="match status" value="1"/>
</dbReference>
<dbReference type="SUPFAM" id="SSF53850">
    <property type="entry name" value="Periplasmic binding protein-like II"/>
    <property type="match status" value="1"/>
</dbReference>
<dbReference type="PROSITE" id="PS51671">
    <property type="entry name" value="ACT"/>
    <property type="match status" value="1"/>
</dbReference>
<dbReference type="PROSITE" id="PS00858">
    <property type="entry name" value="PREPHENATE_DEHYDR_2"/>
    <property type="match status" value="1"/>
</dbReference>
<dbReference type="PROSITE" id="PS51171">
    <property type="entry name" value="PREPHENATE_DEHYDR_3"/>
    <property type="match status" value="1"/>
</dbReference>
<feature type="chain" id="PRO_0000382029" description="Prephenate dehydratase">
    <location>
        <begin position="1"/>
        <end position="321"/>
    </location>
</feature>
<feature type="domain" description="Prephenate dehydratase" evidence="2">
    <location>
        <begin position="3"/>
        <end position="189"/>
    </location>
</feature>
<feature type="domain" description="ACT" evidence="3">
    <location>
        <begin position="203"/>
        <end position="280"/>
    </location>
</feature>
<feature type="site" description="Essential for activity" evidence="1">
    <location>
        <position position="182"/>
    </location>
</feature>
<keyword id="KW-0021">Allosteric enzyme</keyword>
<keyword id="KW-0028">Amino-acid biosynthesis</keyword>
<keyword id="KW-0057">Aromatic amino acid biosynthesis</keyword>
<keyword id="KW-0456">Lyase</keyword>
<keyword id="KW-0584">Phenylalanine biosynthesis</keyword>
<keyword id="KW-1185">Reference proteome</keyword>
<organism>
    <name type="scientific">Mycobacterium tuberculosis (strain ATCC 25618 / H37Rv)</name>
    <dbReference type="NCBI Taxonomy" id="83332"/>
    <lineage>
        <taxon>Bacteria</taxon>
        <taxon>Bacillati</taxon>
        <taxon>Actinomycetota</taxon>
        <taxon>Actinomycetes</taxon>
        <taxon>Mycobacteriales</taxon>
        <taxon>Mycobacteriaceae</taxon>
        <taxon>Mycobacterium</taxon>
        <taxon>Mycobacterium tuberculosis complex</taxon>
    </lineage>
</organism>
<comment type="catalytic activity">
    <reaction evidence="4">
        <text>prephenate + H(+) = 3-phenylpyruvate + CO2 + H2O</text>
        <dbReference type="Rhea" id="RHEA:21648"/>
        <dbReference type="ChEBI" id="CHEBI:15377"/>
        <dbReference type="ChEBI" id="CHEBI:15378"/>
        <dbReference type="ChEBI" id="CHEBI:16526"/>
        <dbReference type="ChEBI" id="CHEBI:18005"/>
        <dbReference type="ChEBI" id="CHEBI:29934"/>
        <dbReference type="EC" id="4.2.1.51"/>
    </reaction>
</comment>
<comment type="activity regulation">
    <text evidence="4">Allosterically regulated by all of the three aromatic amino acids (phenylalanine, tyrosine and tryptophan). Inhibited by low concentrations of aromatic amino acids and highly activated at higher concentrations. Ionic interactions are required for optimal activity.</text>
</comment>
<comment type="biophysicochemical properties">
    <kinetics>
        <KM evidence="4">500 uM for prephenate</KM>
        <Vmax evidence="4">125.0 umol/min/mg enzyme</Vmax>
    </kinetics>
    <phDependence>
        <text evidence="4">Optimum pH is 6-7.</text>
    </phDependence>
    <temperatureDependence>
        <text evidence="4">Optimum temperature is 37-42 degrees Celsius.</text>
    </temperatureDependence>
</comment>
<comment type="pathway">
    <text>Amino-acid biosynthesis; L-phenylalanine biosynthesis; phenylpyruvate from prephenate: step 1/1.</text>
</comment>
<comment type="subunit">
    <text evidence="4">Homodimer.</text>
</comment>
<comment type="domain">
    <text evidence="4">Both domains are absolutely required for activity. In the absence of the ACT domain, the enzyme not only loses its regulatory activity, but also its catalytic activity.</text>
</comment>
<comment type="miscellaneous">
    <text>Was identified as a high-confidence drug target.</text>
</comment>
<protein>
    <recommendedName>
        <fullName>Prephenate dehydratase</fullName>
        <shortName>PDT</shortName>
        <ecNumber>4.2.1.51</ecNumber>
    </recommendedName>
</protein>
<proteinExistence type="evidence at protein level"/>
<accession>P9WIC3</accession>
<accession>L0TFE5</accession>
<accession>P96240</accession>
<accession>Q7D4S0</accession>
<name>PHEA_MYCTU</name>
<reference key="1">
    <citation type="journal article" date="1998" name="Nature">
        <title>Deciphering the biology of Mycobacterium tuberculosis from the complete genome sequence.</title>
        <authorList>
            <person name="Cole S.T."/>
            <person name="Brosch R."/>
            <person name="Parkhill J."/>
            <person name="Garnier T."/>
            <person name="Churcher C.M."/>
            <person name="Harris D.E."/>
            <person name="Gordon S.V."/>
            <person name="Eiglmeier K."/>
            <person name="Gas S."/>
            <person name="Barry C.E. III"/>
            <person name="Tekaia F."/>
            <person name="Badcock K."/>
            <person name="Basham D."/>
            <person name="Brown D."/>
            <person name="Chillingworth T."/>
            <person name="Connor R."/>
            <person name="Davies R.M."/>
            <person name="Devlin K."/>
            <person name="Feltwell T."/>
            <person name="Gentles S."/>
            <person name="Hamlin N."/>
            <person name="Holroyd S."/>
            <person name="Hornsby T."/>
            <person name="Jagels K."/>
            <person name="Krogh A."/>
            <person name="McLean J."/>
            <person name="Moule S."/>
            <person name="Murphy L.D."/>
            <person name="Oliver S."/>
            <person name="Osborne J."/>
            <person name="Quail M.A."/>
            <person name="Rajandream M.A."/>
            <person name="Rogers J."/>
            <person name="Rutter S."/>
            <person name="Seeger K."/>
            <person name="Skelton S."/>
            <person name="Squares S."/>
            <person name="Squares R."/>
            <person name="Sulston J.E."/>
            <person name="Taylor K."/>
            <person name="Whitehead S."/>
            <person name="Barrell B.G."/>
        </authorList>
    </citation>
    <scope>NUCLEOTIDE SEQUENCE [LARGE SCALE GENOMIC DNA]</scope>
    <source>
        <strain>ATCC 25618 / H37Rv</strain>
    </source>
</reference>
<reference key="2">
    <citation type="journal article" date="2005" name="J. Biol. Chem.">
        <title>pheA (Rv3838c) of Mycobacterium tuberculosis encodes an allosterically regulated monofunctional prephenate dehydratase that requires both catalytic and regulatory domains for optimum activity.</title>
        <authorList>
            <person name="Prakash P."/>
            <person name="Pathak N."/>
            <person name="Hasnain S.E."/>
        </authorList>
    </citation>
    <scope>CATALYTIC ACTIVITY</scope>
    <scope>ACTIVITY REGULATION</scope>
    <scope>BIOPHYSICOCHEMICAL PROPERTIES</scope>
    <scope>SUBUNIT</scope>
    <scope>DOMAIN</scope>
    <source>
        <strain>ATCC 25618 / H37Rv</strain>
    </source>
</reference>
<reference key="3">
    <citation type="journal article" date="2008" name="BMC Syst. Biol.">
        <title>targetTB: a target identification pipeline for Mycobacterium tuberculosis through an interactome, reactome and genome-scale structural analysis.</title>
        <authorList>
            <person name="Raman K."/>
            <person name="Yeturu K."/>
            <person name="Chandra N."/>
        </authorList>
    </citation>
    <scope>IDENTIFICATION AS A DRUG TARGET [LARGE SCALE ANALYSIS]</scope>
</reference>
<reference key="4">
    <citation type="journal article" date="2011" name="Mol. Cell. Proteomics">
        <title>Proteogenomic analysis of Mycobacterium tuberculosis by high resolution mass spectrometry.</title>
        <authorList>
            <person name="Kelkar D.S."/>
            <person name="Kumar D."/>
            <person name="Kumar P."/>
            <person name="Balakrishnan L."/>
            <person name="Muthusamy B."/>
            <person name="Yadav A.K."/>
            <person name="Shrivastava P."/>
            <person name="Marimuthu A."/>
            <person name="Anand S."/>
            <person name="Sundaram H."/>
            <person name="Kingsbury R."/>
            <person name="Harsha H.C."/>
            <person name="Nair B."/>
            <person name="Prasad T.S."/>
            <person name="Chauhan D.S."/>
            <person name="Katoch K."/>
            <person name="Katoch V.M."/>
            <person name="Kumar P."/>
            <person name="Chaerkady R."/>
            <person name="Ramachandran S."/>
            <person name="Dash D."/>
            <person name="Pandey A."/>
        </authorList>
    </citation>
    <scope>IDENTIFICATION BY MASS SPECTROMETRY [LARGE SCALE ANALYSIS]</scope>
    <source>
        <strain>ATCC 25618 / H37Rv</strain>
    </source>
</reference>
<evidence type="ECO:0000250" key="1"/>
<evidence type="ECO:0000255" key="2">
    <source>
        <dbReference type="PROSITE-ProRule" id="PRU00517"/>
    </source>
</evidence>
<evidence type="ECO:0000255" key="3">
    <source>
        <dbReference type="PROSITE-ProRule" id="PRU01007"/>
    </source>
</evidence>
<evidence type="ECO:0000269" key="4">
    <source>
    </source>
</evidence>
<gene>
    <name type="primary">pheA</name>
    <name type="ordered locus">Rv3838c</name>
</gene>